<comment type="function">
    <text evidence="2">Probably plays a role in facilitating the assembly of multimeric protein complexes inside the ER. Is required for secretory polypeptide translocation. May physically associate with SEC63 protein in the endoplasmic reticulum and this interaction may be regulated by ATP hydrolysis.</text>
</comment>
<comment type="catalytic activity">
    <reaction evidence="1">
        <text>ATP + H2O = ADP + phosphate + H(+)</text>
        <dbReference type="Rhea" id="RHEA:13065"/>
        <dbReference type="ChEBI" id="CHEBI:15377"/>
        <dbReference type="ChEBI" id="CHEBI:15378"/>
        <dbReference type="ChEBI" id="CHEBI:30616"/>
        <dbReference type="ChEBI" id="CHEBI:43474"/>
        <dbReference type="ChEBI" id="CHEBI:456216"/>
        <dbReference type="EC" id="3.6.4.10"/>
    </reaction>
</comment>
<comment type="activity regulation">
    <text evidence="1">The chaperone activity is regulated by ATP-induced allosteric coupling of the nucleotide-binding (NBD) and substrate-binding (SBD) domains. In the ADP-bound and nucleotide-free (apo) states, the two domains have little interaction. In contrast, in the ATP-bound state the two domains are tightly coupled, which results in drastically accelerated kinetics in both binding and release of polypeptide substrates. J domain-containing co-chaperones stimulate the ATPase activity and are required for efficient substrate recognition.</text>
</comment>
<comment type="subcellular location">
    <subcellularLocation>
        <location evidence="2 4">Endoplasmic reticulum lumen</location>
    </subcellularLocation>
</comment>
<comment type="induction">
    <text evidence="6">By heat shock and tunicamycin. Not induced by carbon source starvation.</text>
</comment>
<comment type="similarity">
    <text evidence="5 7">Belongs to the heat shock protein 70 family.</text>
</comment>
<feature type="signal peptide" evidence="3">
    <location>
        <begin position="1"/>
        <end position="38"/>
    </location>
</feature>
<feature type="chain" id="PRO_0000013578" description="Endoplasmic reticulum chaperone BiP">
    <location>
        <begin position="39"/>
        <end position="672"/>
    </location>
</feature>
<feature type="region of interest" description="Nucleotide-binding (NBD)" evidence="1">
    <location>
        <begin position="145"/>
        <end position="299"/>
    </location>
</feature>
<feature type="region of interest" description="Substrate-binding (SBD)" evidence="1">
    <location>
        <begin position="419"/>
        <end position="519"/>
    </location>
</feature>
<feature type="short sequence motif" description="Prevents secretion from ER" evidence="4">
    <location>
        <begin position="669"/>
        <end position="672"/>
    </location>
</feature>
<feature type="binding site" evidence="1">
    <location>
        <begin position="57"/>
        <end position="60"/>
    </location>
    <ligand>
        <name>ATP</name>
        <dbReference type="ChEBI" id="CHEBI:30616"/>
    </ligand>
</feature>
<feature type="binding site" evidence="1">
    <location>
        <position position="116"/>
    </location>
    <ligand>
        <name>ATP</name>
        <dbReference type="ChEBI" id="CHEBI:30616"/>
    </ligand>
</feature>
<feature type="binding site" evidence="1">
    <location>
        <begin position="246"/>
        <end position="248"/>
    </location>
    <ligand>
        <name>ATP</name>
        <dbReference type="ChEBI" id="CHEBI:30616"/>
    </ligand>
</feature>
<feature type="binding site" evidence="1">
    <location>
        <begin position="312"/>
        <end position="319"/>
    </location>
    <ligand>
        <name>ATP</name>
        <dbReference type="ChEBI" id="CHEBI:30616"/>
    </ligand>
</feature>
<feature type="binding site" evidence="1">
    <location>
        <begin position="383"/>
        <end position="386"/>
    </location>
    <ligand>
        <name>ATP</name>
        <dbReference type="ChEBI" id="CHEBI:30616"/>
    </ligand>
</feature>
<sequence>MARISHQGAAKPFTAWTTIFYLLLVFIAPLAFFGTAHAQDETSPQESYGTVIGIDLGTTYSCVGVMQNGKVEILVNDQGNRITPSYVAFTDEERLVGDAAKNQYAANPRRTIFDIKRLIGRKFDDKDVQKDAKHFPYKVVNKDGKPHVKVDVNQTPKTLTPEEVSAMVLGKMKEIAEGYLGKKVTHAVVTVPAYFNDAQRQATKDAGTIAGLNVLRVVNEPTAAAIAYGLDKTGDERQVIVYDLGGGTFDVSLLSIDNGVFEVLATAGDTHLGGEDFDQRVMDHFVKLYNKKNNVDVTKDLKAMGKLKREVEKAKRTLSSQMSTRIEIEAFHNGEDFSETLTRAKFEELNMDLFKKTLKPVEQVLKDAKVKKSEVDDIVLVGGSTRIPKVQALLEEFFGGKKASKGINPDEAVAFGAAVQGGVLSGEEGTGDVVLMDVNPLTLGIETTGGVMTKLIPRNTVIPTRKSQIFSTAADNQPTVLIQVYEGERSLTKDNNLLGKFELTGIPPAPRGVPQIEVSFDLDANGILKVHASDKGTGKAESITITNDKGRLSQEEIDRMVAEAEEFAEEDKAIKAKIEARNTLENYAFSLKNQVNDENGLGGQIDEDDKQTILDAVKEVTEWLEDNAATATTEDFEEQKEQLSNVAYPITSKLYGSAPADEDDEPSGHDEL</sequence>
<keyword id="KW-0067">ATP-binding</keyword>
<keyword id="KW-0143">Chaperone</keyword>
<keyword id="KW-0256">Endoplasmic reticulum</keyword>
<keyword id="KW-0378">Hydrolase</keyword>
<keyword id="KW-0547">Nucleotide-binding</keyword>
<keyword id="KW-0732">Signal</keyword>
<keyword id="KW-0346">Stress response</keyword>
<organism evidence="7">
    <name type="scientific">Aspergillus niger</name>
    <dbReference type="NCBI Taxonomy" id="5061"/>
    <lineage>
        <taxon>Eukaryota</taxon>
        <taxon>Fungi</taxon>
        <taxon>Dikarya</taxon>
        <taxon>Ascomycota</taxon>
        <taxon>Pezizomycotina</taxon>
        <taxon>Eurotiomycetes</taxon>
        <taxon>Eurotiomycetidae</taxon>
        <taxon>Eurotiales</taxon>
        <taxon>Aspergillaceae</taxon>
        <taxon>Aspergillus</taxon>
        <taxon>Aspergillus subgen. Circumdati</taxon>
    </lineage>
</organism>
<accession>P83616</accession>
<accession>O13280</accession>
<accession>O14453</accession>
<proteinExistence type="evidence at transcript level"/>
<reference evidence="7" key="1">
    <citation type="journal article" date="1997" name="Gene">
        <title>The ER chaperone encoding bipA gene of black Aspergilli is induced by heat shock and unfolded proteins.</title>
        <authorList>
            <person name="van Gemeren I.A."/>
            <person name="Punt P.J."/>
            <person name="Drint-Kuyvenhoven A."/>
            <person name="Broekhuijsen M.P."/>
            <person name="van't Hoog A."/>
            <person name="Beijersbergen A."/>
            <person name="Verrips C.T."/>
            <person name="van den Hondel C.A.M.J.J."/>
        </authorList>
    </citation>
    <scope>NUCLEOTIDE SEQUENCE [GENOMIC DNA]</scope>
    <scope>INDUCTION</scope>
    <source>
        <strain evidence="6">ATCC 9089 / N402</strain>
    </source>
</reference>
<gene>
    <name type="primary">bipA</name>
</gene>
<protein>
    <recommendedName>
        <fullName evidence="7">Endoplasmic reticulum chaperone BiP</fullName>
        <ecNumber evidence="1">3.6.4.10</ecNumber>
    </recommendedName>
    <alternativeName>
        <fullName evidence="7">Immunoglobulin heavy chain-binding protein homolog</fullName>
        <shortName evidence="7">BiP</shortName>
    </alternativeName>
</protein>
<name>BIP_ASPNG</name>
<dbReference type="EC" id="3.6.4.10" evidence="1"/>
<dbReference type="EMBL" id="Y08868">
    <property type="protein sequence ID" value="CAA70091.1"/>
    <property type="molecule type" value="Genomic_DNA"/>
</dbReference>
<dbReference type="RefSeq" id="XP_001394413.1">
    <property type="nucleotide sequence ID" value="XM_001394376.3"/>
</dbReference>
<dbReference type="SMR" id="P83616"/>
<dbReference type="PaxDb" id="5061-CADANGAP00008595"/>
<dbReference type="EnsemblFungi" id="CAK40650">
    <property type="protein sequence ID" value="CAK40650"/>
    <property type="gene ID" value="An11g04180"/>
</dbReference>
<dbReference type="GeneID" id="4984649"/>
<dbReference type="KEGG" id="ang:An11g04180"/>
<dbReference type="VEuPathDB" id="FungiDB:An11g04180"/>
<dbReference type="VEuPathDB" id="FungiDB:ASPNIDRAFT2_1111800"/>
<dbReference type="VEuPathDB" id="FungiDB:ATCC64974_90280"/>
<dbReference type="VEuPathDB" id="FungiDB:M747DRAFT_295101"/>
<dbReference type="eggNOG" id="KOG0100">
    <property type="taxonomic scope" value="Eukaryota"/>
</dbReference>
<dbReference type="OrthoDB" id="2401965at2759"/>
<dbReference type="GO" id="GO:0099021">
    <property type="term" value="C:cortical endoplasmic reticulum lumen"/>
    <property type="evidence" value="ECO:0007669"/>
    <property type="project" value="EnsemblFungi"/>
</dbReference>
<dbReference type="GO" id="GO:0005788">
    <property type="term" value="C:endoplasmic reticulum lumen"/>
    <property type="evidence" value="ECO:0000303"/>
    <property type="project" value="UniProtKB"/>
</dbReference>
<dbReference type="GO" id="GO:0034099">
    <property type="term" value="C:luminal surveillance complex"/>
    <property type="evidence" value="ECO:0007669"/>
    <property type="project" value="EnsemblFungi"/>
</dbReference>
<dbReference type="GO" id="GO:0031965">
    <property type="term" value="C:nuclear membrane"/>
    <property type="evidence" value="ECO:0007669"/>
    <property type="project" value="EnsemblFungi"/>
</dbReference>
<dbReference type="GO" id="GO:0099020">
    <property type="term" value="C:perinuclear endoplasmic reticulum lumen"/>
    <property type="evidence" value="ECO:0007669"/>
    <property type="project" value="EnsemblFungi"/>
</dbReference>
<dbReference type="GO" id="GO:0005524">
    <property type="term" value="F:ATP binding"/>
    <property type="evidence" value="ECO:0007669"/>
    <property type="project" value="UniProtKB-KW"/>
</dbReference>
<dbReference type="GO" id="GO:0016887">
    <property type="term" value="F:ATP hydrolysis activity"/>
    <property type="evidence" value="ECO:0007669"/>
    <property type="project" value="EnsemblFungi"/>
</dbReference>
<dbReference type="GO" id="GO:0140662">
    <property type="term" value="F:ATP-dependent protein folding chaperone"/>
    <property type="evidence" value="ECO:0007669"/>
    <property type="project" value="InterPro"/>
</dbReference>
<dbReference type="GO" id="GO:0015450">
    <property type="term" value="F:protein-transporting ATPase activity"/>
    <property type="evidence" value="ECO:0007669"/>
    <property type="project" value="EnsemblFungi"/>
</dbReference>
<dbReference type="GO" id="GO:0051082">
    <property type="term" value="F:unfolded protein binding"/>
    <property type="evidence" value="ECO:0007669"/>
    <property type="project" value="EnsemblFungi"/>
</dbReference>
<dbReference type="GO" id="GO:0036503">
    <property type="term" value="P:ERAD pathway"/>
    <property type="evidence" value="ECO:0007669"/>
    <property type="project" value="EnsemblFungi"/>
</dbReference>
<dbReference type="GO" id="GO:0070880">
    <property type="term" value="P:fungal-type cell wall beta-glucan biosynthetic process"/>
    <property type="evidence" value="ECO:0007669"/>
    <property type="project" value="EnsemblFungi"/>
</dbReference>
<dbReference type="GO" id="GO:0036498">
    <property type="term" value="P:IRE1-mediated unfolded protein response"/>
    <property type="evidence" value="ECO:0007669"/>
    <property type="project" value="EnsemblFungi"/>
</dbReference>
<dbReference type="GO" id="GO:0000742">
    <property type="term" value="P:karyogamy involved in conjugation with cellular fusion"/>
    <property type="evidence" value="ECO:0007669"/>
    <property type="project" value="EnsemblFungi"/>
</dbReference>
<dbReference type="GO" id="GO:0031204">
    <property type="term" value="P:post-translational protein targeting to membrane, translocation"/>
    <property type="evidence" value="ECO:0007669"/>
    <property type="project" value="EnsemblFungi"/>
</dbReference>
<dbReference type="GO" id="GO:0006986">
    <property type="term" value="P:response to unfolded protein"/>
    <property type="evidence" value="ECO:0000314"/>
    <property type="project" value="UniProtKB"/>
</dbReference>
<dbReference type="GO" id="GO:0032940">
    <property type="term" value="P:secretion by cell"/>
    <property type="evidence" value="ECO:0000303"/>
    <property type="project" value="UniProtKB"/>
</dbReference>
<dbReference type="GO" id="GO:0006616">
    <property type="term" value="P:SRP-dependent cotranslational protein targeting to membrane, translocation"/>
    <property type="evidence" value="ECO:0007669"/>
    <property type="project" value="EnsemblFungi"/>
</dbReference>
<dbReference type="CDD" id="cd10241">
    <property type="entry name" value="ASKHA_NBD_HSP70_BiP"/>
    <property type="match status" value="1"/>
</dbReference>
<dbReference type="FunFam" id="1.20.1270.10:FF:000009">
    <property type="entry name" value="DnaK-type molecular chaperone BiP"/>
    <property type="match status" value="1"/>
</dbReference>
<dbReference type="FunFam" id="3.90.640.10:FF:000153">
    <property type="entry name" value="Endoplasmic reticulum chaperone BiP"/>
    <property type="match status" value="1"/>
</dbReference>
<dbReference type="FunFam" id="2.60.34.10:FF:000002">
    <property type="entry name" value="Heat shock 70 kDa"/>
    <property type="match status" value="1"/>
</dbReference>
<dbReference type="FunFam" id="3.30.420.40:FF:000172">
    <property type="entry name" value="Heat shock 70 kDa protein"/>
    <property type="match status" value="1"/>
</dbReference>
<dbReference type="FunFam" id="3.30.30.30:FF:000001">
    <property type="entry name" value="heat shock 70 kDa protein-like"/>
    <property type="match status" value="1"/>
</dbReference>
<dbReference type="FunFam" id="3.30.420.40:FF:000026">
    <property type="entry name" value="Heat shock protein 70"/>
    <property type="match status" value="1"/>
</dbReference>
<dbReference type="Gene3D" id="1.20.1270.10">
    <property type="match status" value="1"/>
</dbReference>
<dbReference type="Gene3D" id="3.30.30.30">
    <property type="match status" value="1"/>
</dbReference>
<dbReference type="Gene3D" id="3.30.420.40">
    <property type="match status" value="2"/>
</dbReference>
<dbReference type="Gene3D" id="3.90.640.10">
    <property type="entry name" value="Actin, Chain A, domain 4"/>
    <property type="match status" value="1"/>
</dbReference>
<dbReference type="Gene3D" id="2.60.34.10">
    <property type="entry name" value="Substrate Binding Domain Of DNAk, Chain A, domain 1"/>
    <property type="match status" value="1"/>
</dbReference>
<dbReference type="InterPro" id="IPR043129">
    <property type="entry name" value="ATPase_NBD"/>
</dbReference>
<dbReference type="InterPro" id="IPR042050">
    <property type="entry name" value="BIP_NBD"/>
</dbReference>
<dbReference type="InterPro" id="IPR018181">
    <property type="entry name" value="Heat_shock_70_CS"/>
</dbReference>
<dbReference type="InterPro" id="IPR029048">
    <property type="entry name" value="HSP70_C_sf"/>
</dbReference>
<dbReference type="InterPro" id="IPR029047">
    <property type="entry name" value="HSP70_peptide-bd_sf"/>
</dbReference>
<dbReference type="InterPro" id="IPR013126">
    <property type="entry name" value="Hsp_70_fam"/>
</dbReference>
<dbReference type="NCBIfam" id="NF001413">
    <property type="entry name" value="PRK00290.1"/>
    <property type="match status" value="1"/>
</dbReference>
<dbReference type="PANTHER" id="PTHR19375">
    <property type="entry name" value="HEAT SHOCK PROTEIN 70KDA"/>
    <property type="match status" value="1"/>
</dbReference>
<dbReference type="Pfam" id="PF00012">
    <property type="entry name" value="HSP70"/>
    <property type="match status" value="1"/>
</dbReference>
<dbReference type="PRINTS" id="PR00301">
    <property type="entry name" value="HEATSHOCK70"/>
</dbReference>
<dbReference type="SUPFAM" id="SSF53067">
    <property type="entry name" value="Actin-like ATPase domain"/>
    <property type="match status" value="2"/>
</dbReference>
<dbReference type="SUPFAM" id="SSF100934">
    <property type="entry name" value="Heat shock protein 70kD (HSP70), C-terminal subdomain"/>
    <property type="match status" value="1"/>
</dbReference>
<dbReference type="SUPFAM" id="SSF100920">
    <property type="entry name" value="Heat shock protein 70kD (HSP70), peptide-binding domain"/>
    <property type="match status" value="1"/>
</dbReference>
<dbReference type="PROSITE" id="PS00014">
    <property type="entry name" value="ER_TARGET"/>
    <property type="match status" value="1"/>
</dbReference>
<dbReference type="PROSITE" id="PS00297">
    <property type="entry name" value="HSP70_1"/>
    <property type="match status" value="1"/>
</dbReference>
<dbReference type="PROSITE" id="PS00329">
    <property type="entry name" value="HSP70_2"/>
    <property type="match status" value="1"/>
</dbReference>
<dbReference type="PROSITE" id="PS01036">
    <property type="entry name" value="HSP70_3"/>
    <property type="match status" value="1"/>
</dbReference>
<evidence type="ECO:0000250" key="1">
    <source>
        <dbReference type="UniProtKB" id="P11021"/>
    </source>
</evidence>
<evidence type="ECO:0000250" key="2">
    <source>
        <dbReference type="UniProtKB" id="P16474"/>
    </source>
</evidence>
<evidence type="ECO:0000255" key="3"/>
<evidence type="ECO:0000255" key="4">
    <source>
        <dbReference type="PROSITE-ProRule" id="PRU10138"/>
    </source>
</evidence>
<evidence type="ECO:0000255" key="5">
    <source>
        <dbReference type="RuleBase" id="RU003322"/>
    </source>
</evidence>
<evidence type="ECO:0000269" key="6">
    <source>
    </source>
</evidence>
<evidence type="ECO:0000305" key="7"/>